<evidence type="ECO:0000250" key="1">
    <source>
        <dbReference type="UniProtKB" id="Q00516"/>
    </source>
</evidence>
<evidence type="ECO:0000255" key="2"/>
<evidence type="ECO:0000255" key="3">
    <source>
        <dbReference type="PROSITE-ProRule" id="PRU01070"/>
    </source>
</evidence>
<evidence type="ECO:0000305" key="4"/>
<feature type="propeptide" id="PRO_0000024230" description="Leader sequence" evidence="3">
    <location>
        <begin position="1"/>
        <end position="5"/>
    </location>
</feature>
<feature type="chain" id="PRO_0000024231" description="Type II secretion system protein I">
    <location>
        <begin position="6"/>
        <end position="119"/>
    </location>
</feature>
<feature type="transmembrane region" description="Helical" evidence="2">
    <location>
        <begin position="6"/>
        <end position="26"/>
    </location>
</feature>
<feature type="modified residue" description="N-methylmethionine" evidence="3">
    <location>
        <position position="6"/>
    </location>
</feature>
<accession>P31737</accession>
<proteinExistence type="inferred from homology"/>
<gene>
    <name type="primary">exeI</name>
</gene>
<protein>
    <recommendedName>
        <fullName>Type II secretion system protein I</fullName>
        <shortName>T2SS minor pseudopilin I</shortName>
    </recommendedName>
    <alternativeName>
        <fullName>General secretion pathway protein I</fullName>
    </alternativeName>
</protein>
<name>GSPI_AERHY</name>
<sequence length="119" mass="13339">MNARGMTLLEVMVALAVFAIAGLAVMKTASEHLSALNYLEEKTLATWVVENQLVQQKLEAKWPGDSWVEGGEQMAGQTWYWRYRGVATADNNFKALDMEVRTAPKAESPVAFIRTYISR</sequence>
<keyword id="KW-0997">Cell inner membrane</keyword>
<keyword id="KW-1003">Cell membrane</keyword>
<keyword id="KW-0472">Membrane</keyword>
<keyword id="KW-0488">Methylation</keyword>
<keyword id="KW-0653">Protein transport</keyword>
<keyword id="KW-0812">Transmembrane</keyword>
<keyword id="KW-1133">Transmembrane helix</keyword>
<keyword id="KW-0813">Transport</keyword>
<comment type="function">
    <text evidence="1">Component of the type II secretion system required for the energy-dependent secretion of extracellular factors such as proteases and toxins from the periplasm. Part of the pseudopilus tip complex that is critical for the recognition and binding of secretion substrates.</text>
</comment>
<comment type="subunit">
    <text evidence="1">Type II secretion is composed of four main components: the outer membrane complex, the inner membrane complex, the cytoplasmic secretion ATPase and the periplasm-spanning pseudopilus. Interacts with core component ExeG.</text>
</comment>
<comment type="subcellular location">
    <subcellularLocation>
        <location evidence="1">Cell inner membrane</location>
        <topology evidence="2">Single-pass membrane protein</topology>
    </subcellularLocation>
</comment>
<comment type="PTM">
    <text evidence="1">Cleaved by prepilin peptidase.</text>
</comment>
<comment type="PTM">
    <text evidence="1">Methylated by prepilin peptidase at the amino group of the N-terminal methionine once the leader sequence is cleaved by prepilin peptidase.</text>
</comment>
<comment type="similarity">
    <text evidence="4">Belongs to the GSP I family.</text>
</comment>
<organism>
    <name type="scientific">Aeromonas hydrophila</name>
    <dbReference type="NCBI Taxonomy" id="644"/>
    <lineage>
        <taxon>Bacteria</taxon>
        <taxon>Pseudomonadati</taxon>
        <taxon>Pseudomonadota</taxon>
        <taxon>Gammaproteobacteria</taxon>
        <taxon>Aeromonadales</taxon>
        <taxon>Aeromonadaceae</taxon>
        <taxon>Aeromonas</taxon>
    </lineage>
</organism>
<reference key="1">
    <citation type="journal article" date="1993" name="J. Bacteriol.">
        <title>Isolation and analysis of eight exe genes and their involvement in extracellular protein secretion and outer membrane assembly in Aeromonas hydrophila.</title>
        <authorList>
            <person name="Howard S.P."/>
            <person name="Critch J."/>
            <person name="Bedi A."/>
        </authorList>
    </citation>
    <scope>NUCLEOTIDE SEQUENCE [GENOMIC DNA]</scope>
    <source>
        <strain>Ah65</strain>
    </source>
</reference>
<dbReference type="EMBL" id="X66504">
    <property type="protein sequence ID" value="CAA47130.1"/>
    <property type="molecule type" value="Genomic_DNA"/>
</dbReference>
<dbReference type="PIR" id="B49905">
    <property type="entry name" value="B49905"/>
</dbReference>
<dbReference type="SMR" id="P31737"/>
<dbReference type="eggNOG" id="COG2165">
    <property type="taxonomic scope" value="Bacteria"/>
</dbReference>
<dbReference type="GO" id="GO:0005886">
    <property type="term" value="C:plasma membrane"/>
    <property type="evidence" value="ECO:0007669"/>
    <property type="project" value="UniProtKB-SubCell"/>
</dbReference>
<dbReference type="GO" id="GO:0015627">
    <property type="term" value="C:type II protein secretion system complex"/>
    <property type="evidence" value="ECO:0007669"/>
    <property type="project" value="InterPro"/>
</dbReference>
<dbReference type="GO" id="GO:0015628">
    <property type="term" value="P:protein secretion by the type II secretion system"/>
    <property type="evidence" value="ECO:0007669"/>
    <property type="project" value="InterPro"/>
</dbReference>
<dbReference type="Gene3D" id="3.30.1300.30">
    <property type="entry name" value="GSPII I/J protein-like"/>
    <property type="match status" value="1"/>
</dbReference>
<dbReference type="InterPro" id="IPR012902">
    <property type="entry name" value="N_methyl_site"/>
</dbReference>
<dbReference type="InterPro" id="IPR045584">
    <property type="entry name" value="Pilin-like"/>
</dbReference>
<dbReference type="InterPro" id="IPR003413">
    <property type="entry name" value="T2SS_GspI_C"/>
</dbReference>
<dbReference type="InterPro" id="IPR010052">
    <property type="entry name" value="T2SS_protein-GspI"/>
</dbReference>
<dbReference type="NCBIfam" id="TIGR01707">
    <property type="entry name" value="gspI"/>
    <property type="match status" value="1"/>
</dbReference>
<dbReference type="NCBIfam" id="TIGR02532">
    <property type="entry name" value="IV_pilin_GFxxxE"/>
    <property type="match status" value="1"/>
</dbReference>
<dbReference type="PANTHER" id="PTHR38779">
    <property type="entry name" value="TYPE II SECRETION SYSTEM PROTEIN I-RELATED"/>
    <property type="match status" value="1"/>
</dbReference>
<dbReference type="PANTHER" id="PTHR38779:SF2">
    <property type="entry name" value="TYPE II SECRETION SYSTEM PROTEIN I-RELATED"/>
    <property type="match status" value="1"/>
</dbReference>
<dbReference type="Pfam" id="PF07963">
    <property type="entry name" value="N_methyl"/>
    <property type="match status" value="1"/>
</dbReference>
<dbReference type="Pfam" id="PF02501">
    <property type="entry name" value="T2SSI"/>
    <property type="match status" value="1"/>
</dbReference>
<dbReference type="SUPFAM" id="SSF54523">
    <property type="entry name" value="Pili subunits"/>
    <property type="match status" value="1"/>
</dbReference>
<dbReference type="PROSITE" id="PS00409">
    <property type="entry name" value="PROKAR_NTER_METHYL"/>
    <property type="match status" value="1"/>
</dbReference>